<geneLocation type="chloroplast"/>
<protein>
    <recommendedName>
        <fullName evidence="1">Small ribosomal subunit protein uS2c</fullName>
    </recommendedName>
    <alternativeName>
        <fullName>30S ribosomal protein S2, chloroplastic</fullName>
    </alternativeName>
</protein>
<dbReference type="EMBL" id="AP009123">
    <property type="protein sequence ID" value="BAF41236.1"/>
    <property type="molecule type" value="Genomic_DNA"/>
</dbReference>
<dbReference type="RefSeq" id="YP_913176.1">
    <property type="nucleotide sequence ID" value="NC_008641.1"/>
</dbReference>
<dbReference type="SMR" id="A0ZZ24"/>
<dbReference type="GeneID" id="4575254"/>
<dbReference type="GO" id="GO:0009507">
    <property type="term" value="C:chloroplast"/>
    <property type="evidence" value="ECO:0007669"/>
    <property type="project" value="UniProtKB-SubCell"/>
</dbReference>
<dbReference type="GO" id="GO:0005763">
    <property type="term" value="C:mitochondrial small ribosomal subunit"/>
    <property type="evidence" value="ECO:0007669"/>
    <property type="project" value="TreeGrafter"/>
</dbReference>
<dbReference type="GO" id="GO:0003735">
    <property type="term" value="F:structural constituent of ribosome"/>
    <property type="evidence" value="ECO:0007669"/>
    <property type="project" value="InterPro"/>
</dbReference>
<dbReference type="GO" id="GO:0006412">
    <property type="term" value="P:translation"/>
    <property type="evidence" value="ECO:0007669"/>
    <property type="project" value="UniProtKB-UniRule"/>
</dbReference>
<dbReference type="CDD" id="cd01425">
    <property type="entry name" value="RPS2"/>
    <property type="match status" value="1"/>
</dbReference>
<dbReference type="FunFam" id="3.40.50.10490:FF:000101">
    <property type="match status" value="1"/>
</dbReference>
<dbReference type="FunFam" id="1.10.287.610:FF:000001">
    <property type="entry name" value="30S ribosomal protein S2"/>
    <property type="match status" value="1"/>
</dbReference>
<dbReference type="Gene3D" id="3.40.50.10490">
    <property type="entry name" value="Glucose-6-phosphate isomerase like protein, domain 1"/>
    <property type="match status" value="1"/>
</dbReference>
<dbReference type="Gene3D" id="1.10.287.610">
    <property type="entry name" value="Helix hairpin bin"/>
    <property type="match status" value="1"/>
</dbReference>
<dbReference type="HAMAP" id="MF_00291_B">
    <property type="entry name" value="Ribosomal_uS2_B"/>
    <property type="match status" value="1"/>
</dbReference>
<dbReference type="InterPro" id="IPR001865">
    <property type="entry name" value="Ribosomal_uS2"/>
</dbReference>
<dbReference type="InterPro" id="IPR005706">
    <property type="entry name" value="Ribosomal_uS2_bac/mit/plastid"/>
</dbReference>
<dbReference type="InterPro" id="IPR018130">
    <property type="entry name" value="Ribosomal_uS2_CS"/>
</dbReference>
<dbReference type="InterPro" id="IPR023591">
    <property type="entry name" value="Ribosomal_uS2_flav_dom_sf"/>
</dbReference>
<dbReference type="NCBIfam" id="TIGR01011">
    <property type="entry name" value="rpsB_bact"/>
    <property type="match status" value="1"/>
</dbReference>
<dbReference type="PANTHER" id="PTHR12534">
    <property type="entry name" value="30S RIBOSOMAL PROTEIN S2 PROKARYOTIC AND ORGANELLAR"/>
    <property type="match status" value="1"/>
</dbReference>
<dbReference type="PANTHER" id="PTHR12534:SF0">
    <property type="entry name" value="SMALL RIBOSOMAL SUBUNIT PROTEIN US2M"/>
    <property type="match status" value="1"/>
</dbReference>
<dbReference type="Pfam" id="PF00318">
    <property type="entry name" value="Ribosomal_S2"/>
    <property type="match status" value="1"/>
</dbReference>
<dbReference type="PRINTS" id="PR00395">
    <property type="entry name" value="RIBOSOMALS2"/>
</dbReference>
<dbReference type="SUPFAM" id="SSF52313">
    <property type="entry name" value="Ribosomal protein S2"/>
    <property type="match status" value="1"/>
</dbReference>
<dbReference type="PROSITE" id="PS00962">
    <property type="entry name" value="RIBOSOMAL_S2_1"/>
    <property type="match status" value="1"/>
</dbReference>
<dbReference type="PROSITE" id="PS00963">
    <property type="entry name" value="RIBOSOMAL_S2_2"/>
    <property type="match status" value="1"/>
</dbReference>
<proteinExistence type="inferred from homology"/>
<organism>
    <name type="scientific">Gossypium barbadense</name>
    <name type="common">Sea Island cotton</name>
    <name type="synonym">Hibiscus barbadensis</name>
    <dbReference type="NCBI Taxonomy" id="3634"/>
    <lineage>
        <taxon>Eukaryota</taxon>
        <taxon>Viridiplantae</taxon>
        <taxon>Streptophyta</taxon>
        <taxon>Embryophyta</taxon>
        <taxon>Tracheophyta</taxon>
        <taxon>Spermatophyta</taxon>
        <taxon>Magnoliopsida</taxon>
        <taxon>eudicotyledons</taxon>
        <taxon>Gunneridae</taxon>
        <taxon>Pentapetalae</taxon>
        <taxon>rosids</taxon>
        <taxon>malvids</taxon>
        <taxon>Malvales</taxon>
        <taxon>Malvaceae</taxon>
        <taxon>Malvoideae</taxon>
        <taxon>Gossypium</taxon>
    </lineage>
</organism>
<name>RR2_GOSBA</name>
<comment type="subcellular location">
    <subcellularLocation>
        <location>Plastid</location>
        <location>Chloroplast</location>
    </subcellularLocation>
</comment>
<comment type="similarity">
    <text evidence="1">Belongs to the universal ribosomal protein uS2 family.</text>
</comment>
<gene>
    <name type="primary">rps2</name>
</gene>
<feature type="chain" id="PRO_0000352115" description="Small ribosomal subunit protein uS2c">
    <location>
        <begin position="1"/>
        <end position="236"/>
    </location>
</feature>
<evidence type="ECO:0000305" key="1"/>
<sequence length="236" mass="26724">MARRYWNINLEEMLEAGVHFGHGTRKWNPRMAPYISAKRKGIHITNLTRTARFLSEACDLVFDAASKGKQFLIVGTKNKAADSVARAAIRARCHYVNKKWLGGMLTNWPTTETRLHKFRDLRTEQKTGGLNRLPKRDAAMLKRQLSRLQTYLGGIKYMTRLPDIVIIVDQQEEYTALRECITLGIPTICLIDTNSDPDLADISIPANDDAIASIRLILNKLVVAICEGRSSYIRNP</sequence>
<keyword id="KW-0150">Chloroplast</keyword>
<keyword id="KW-0934">Plastid</keyword>
<keyword id="KW-0687">Ribonucleoprotein</keyword>
<keyword id="KW-0689">Ribosomal protein</keyword>
<accession>A0ZZ24</accession>
<reference key="1">
    <citation type="journal article" date="2006" name="Genes Genet. Syst.">
        <title>Complete nucleotide sequence of the cotton (Gossypium barbadense L.) chloroplast genome with a comparative analysis of sequences among 9 dicot plants.</title>
        <authorList>
            <person name="Ibrahim R.I.H."/>
            <person name="Azuma J."/>
            <person name="Sakamoto M."/>
        </authorList>
    </citation>
    <scope>NUCLEOTIDE SEQUENCE [LARGE SCALE GENOMIC DNA]</scope>
</reference>